<keyword id="KW-0067">ATP-binding</keyword>
<keyword id="KW-0436">Ligase</keyword>
<keyword id="KW-0547">Nucleotide-binding</keyword>
<keyword id="KW-0658">Purine biosynthesis</keyword>
<feature type="chain" id="PRO_1000018725" description="Phosphoribosylaminoimidazole-succinocarboxamide synthase">
    <location>
        <begin position="1"/>
        <end position="237"/>
    </location>
</feature>
<organism>
    <name type="scientific">Marinobacter nauticus (strain ATCC 700491 / DSM 11845 / VT8)</name>
    <name type="common">Marinobacter aquaeolei</name>
    <dbReference type="NCBI Taxonomy" id="351348"/>
    <lineage>
        <taxon>Bacteria</taxon>
        <taxon>Pseudomonadati</taxon>
        <taxon>Pseudomonadota</taxon>
        <taxon>Gammaproteobacteria</taxon>
        <taxon>Pseudomonadales</taxon>
        <taxon>Marinobacteraceae</taxon>
        <taxon>Marinobacter</taxon>
    </lineage>
</organism>
<reference key="1">
    <citation type="journal article" date="2011" name="Appl. Environ. Microbiol.">
        <title>Genomic potential of Marinobacter aquaeolei, a biogeochemical 'opportunitroph'.</title>
        <authorList>
            <person name="Singer E."/>
            <person name="Webb E.A."/>
            <person name="Nelson W.C."/>
            <person name="Heidelberg J.F."/>
            <person name="Ivanova N."/>
            <person name="Pati A."/>
            <person name="Edwards K.J."/>
        </authorList>
    </citation>
    <scope>NUCLEOTIDE SEQUENCE [LARGE SCALE GENOMIC DNA]</scope>
    <source>
        <strain>ATCC 700491 / DSM 11845 / VT8</strain>
    </source>
</reference>
<evidence type="ECO:0000255" key="1">
    <source>
        <dbReference type="HAMAP-Rule" id="MF_00137"/>
    </source>
</evidence>
<sequence length="237" mass="27046">MEKREELYAGKAKSVYRTDDPERFVLVFRDDTSAFDGEKKEQLNRKGMVNNKFNAFIMEKLEAAGVPTHFEGLLSDTESLVKKLEMIPVECVVRNVSAGSLCRRLGVEEGLELNPPTFELFLKNDALHDPMVNESLAVSFGWAKADELARMKELTYKVNDVLKKLFDDAGMLLVDYKLEFGRSGGQIVLGDEFSPDGCRIWDKETRKKMDKDRFRQGLGEVIETYEEVGRRLGIKFD</sequence>
<proteinExistence type="inferred from homology"/>
<comment type="catalytic activity">
    <reaction evidence="1">
        <text>5-amino-1-(5-phospho-D-ribosyl)imidazole-4-carboxylate + L-aspartate + ATP = (2S)-2-[5-amino-1-(5-phospho-beta-D-ribosyl)imidazole-4-carboxamido]succinate + ADP + phosphate + 2 H(+)</text>
        <dbReference type="Rhea" id="RHEA:22628"/>
        <dbReference type="ChEBI" id="CHEBI:15378"/>
        <dbReference type="ChEBI" id="CHEBI:29991"/>
        <dbReference type="ChEBI" id="CHEBI:30616"/>
        <dbReference type="ChEBI" id="CHEBI:43474"/>
        <dbReference type="ChEBI" id="CHEBI:58443"/>
        <dbReference type="ChEBI" id="CHEBI:77657"/>
        <dbReference type="ChEBI" id="CHEBI:456216"/>
        <dbReference type="EC" id="6.3.2.6"/>
    </reaction>
</comment>
<comment type="pathway">
    <text evidence="1">Purine metabolism; IMP biosynthesis via de novo pathway; 5-amino-1-(5-phospho-D-ribosyl)imidazole-4-carboxamide from 5-amino-1-(5-phospho-D-ribosyl)imidazole-4-carboxylate: step 1/2.</text>
</comment>
<comment type="similarity">
    <text evidence="1">Belongs to the SAICAR synthetase family.</text>
</comment>
<protein>
    <recommendedName>
        <fullName evidence="1">Phosphoribosylaminoimidazole-succinocarboxamide synthase</fullName>
        <ecNumber evidence="1">6.3.2.6</ecNumber>
    </recommendedName>
    <alternativeName>
        <fullName evidence="1">SAICAR synthetase</fullName>
    </alternativeName>
</protein>
<dbReference type="EC" id="6.3.2.6" evidence="1"/>
<dbReference type="EMBL" id="CP000514">
    <property type="protein sequence ID" value="ABM18773.1"/>
    <property type="molecule type" value="Genomic_DNA"/>
</dbReference>
<dbReference type="RefSeq" id="WP_011785172.1">
    <property type="nucleotide sequence ID" value="NC_008740.1"/>
</dbReference>
<dbReference type="SMR" id="A1U1A4"/>
<dbReference type="STRING" id="351348.Maqu_1689"/>
<dbReference type="GeneID" id="31821072"/>
<dbReference type="KEGG" id="maq:Maqu_1689"/>
<dbReference type="eggNOG" id="COG0152">
    <property type="taxonomic scope" value="Bacteria"/>
</dbReference>
<dbReference type="HOGENOM" id="CLU_061495_2_0_6"/>
<dbReference type="OrthoDB" id="9801549at2"/>
<dbReference type="UniPathway" id="UPA00074">
    <property type="reaction ID" value="UER00131"/>
</dbReference>
<dbReference type="Proteomes" id="UP000000998">
    <property type="component" value="Chromosome"/>
</dbReference>
<dbReference type="GO" id="GO:0005829">
    <property type="term" value="C:cytosol"/>
    <property type="evidence" value="ECO:0007669"/>
    <property type="project" value="TreeGrafter"/>
</dbReference>
<dbReference type="GO" id="GO:0005524">
    <property type="term" value="F:ATP binding"/>
    <property type="evidence" value="ECO:0007669"/>
    <property type="project" value="UniProtKB-KW"/>
</dbReference>
<dbReference type="GO" id="GO:0004639">
    <property type="term" value="F:phosphoribosylaminoimidazolesuccinocarboxamide synthase activity"/>
    <property type="evidence" value="ECO:0007669"/>
    <property type="project" value="UniProtKB-UniRule"/>
</dbReference>
<dbReference type="GO" id="GO:0006189">
    <property type="term" value="P:'de novo' IMP biosynthetic process"/>
    <property type="evidence" value="ECO:0007669"/>
    <property type="project" value="UniProtKB-UniRule"/>
</dbReference>
<dbReference type="GO" id="GO:0009236">
    <property type="term" value="P:cobalamin biosynthetic process"/>
    <property type="evidence" value="ECO:0007669"/>
    <property type="project" value="InterPro"/>
</dbReference>
<dbReference type="CDD" id="cd01415">
    <property type="entry name" value="SAICAR_synt_PurC"/>
    <property type="match status" value="1"/>
</dbReference>
<dbReference type="FunFam" id="3.30.200.20:FF:000086">
    <property type="entry name" value="Phosphoribosylaminoimidazole-succinocarboxamide synthase"/>
    <property type="match status" value="1"/>
</dbReference>
<dbReference type="FunFam" id="3.30.470.20:FF:000006">
    <property type="entry name" value="Phosphoribosylaminoimidazole-succinocarboxamide synthase"/>
    <property type="match status" value="1"/>
</dbReference>
<dbReference type="Gene3D" id="3.30.470.20">
    <property type="entry name" value="ATP-grasp fold, B domain"/>
    <property type="match status" value="1"/>
</dbReference>
<dbReference type="Gene3D" id="3.30.200.20">
    <property type="entry name" value="Phosphorylase Kinase, domain 1"/>
    <property type="match status" value="1"/>
</dbReference>
<dbReference type="HAMAP" id="MF_00137">
    <property type="entry name" value="SAICAR_synth"/>
    <property type="match status" value="1"/>
</dbReference>
<dbReference type="InterPro" id="IPR028923">
    <property type="entry name" value="SAICAR_synt/ADE2_N"/>
</dbReference>
<dbReference type="InterPro" id="IPR033934">
    <property type="entry name" value="SAICAR_synt_PurC"/>
</dbReference>
<dbReference type="InterPro" id="IPR001636">
    <property type="entry name" value="SAICAR_synth"/>
</dbReference>
<dbReference type="InterPro" id="IPR050089">
    <property type="entry name" value="SAICAR_synthetase"/>
</dbReference>
<dbReference type="InterPro" id="IPR018236">
    <property type="entry name" value="SAICAR_synthetase_CS"/>
</dbReference>
<dbReference type="NCBIfam" id="TIGR00081">
    <property type="entry name" value="purC"/>
    <property type="match status" value="1"/>
</dbReference>
<dbReference type="PANTHER" id="PTHR43599">
    <property type="entry name" value="MULTIFUNCTIONAL PROTEIN ADE2"/>
    <property type="match status" value="1"/>
</dbReference>
<dbReference type="PANTHER" id="PTHR43599:SF3">
    <property type="entry name" value="SI:DKEY-6E2.2"/>
    <property type="match status" value="1"/>
</dbReference>
<dbReference type="Pfam" id="PF01259">
    <property type="entry name" value="SAICAR_synt"/>
    <property type="match status" value="1"/>
</dbReference>
<dbReference type="SUPFAM" id="SSF56104">
    <property type="entry name" value="SAICAR synthase-like"/>
    <property type="match status" value="1"/>
</dbReference>
<dbReference type="PROSITE" id="PS01057">
    <property type="entry name" value="SAICAR_SYNTHETASE_1"/>
    <property type="match status" value="1"/>
</dbReference>
<dbReference type="PROSITE" id="PS01058">
    <property type="entry name" value="SAICAR_SYNTHETASE_2"/>
    <property type="match status" value="1"/>
</dbReference>
<name>PUR7_MARN8</name>
<accession>A1U1A4</accession>
<gene>
    <name evidence="1" type="primary">purC</name>
    <name type="ordered locus">Maqu_1689</name>
</gene>